<sequence length="419" mass="45116">MPAENSPAPAYKVSSHGGDSGLDGLGGPGVQLGSPDKKKRKANTQGPSFPPLSEYAPPPNPNSDHLVAANPFDDNYNTISYKPLPSSNPYLGPGYPGFGGYSTFRMPPHVPPRMSSPYCGPYSLRNQPHPFPQNPLGMGFNRPHAFNFGPHDNSSFGNPSYNNALSQNVNMPNQHFRQNPAENFSQIPPQNASQVSNPDLASNFVPGNNSNFTSPLESNHSFIPPPNTFGQAKAPPPKQDFTQGATKNTNQNSSAHPPHLNMDDTVNQSNIELKNVNRNNAVNQENSRSSSTEATNNNPANGTQNKPRQPRGAADACTTEKSNKSSLHPNRHGHSSSDPVYPCGICTNEVNDDQDAILCEASCQKWFHRICTGMTETAYGLLTAEASAVWGCDTCMADKDVQLMRTRETFGPSAVGSDA</sequence>
<gene>
    <name type="primary">PYGO1</name>
</gene>
<name>PYGO1_HUMAN</name>
<reference key="1">
    <citation type="journal article" date="2002" name="Cell">
        <title>Wnt/wingless signaling requires BCL9/legless-mediated recruitment of pygopus to the nuclear beta-catenin-TCF complex.</title>
        <authorList>
            <person name="Kramps T."/>
            <person name="Peter O."/>
            <person name="Brunner E."/>
            <person name="Nellen D."/>
            <person name="Froesch B."/>
            <person name="Chatterjee S."/>
            <person name="Murone M."/>
            <person name="Zuellig S."/>
            <person name="Basler K."/>
        </authorList>
    </citation>
    <scope>NUCLEOTIDE SEQUENCE [MRNA] (ISOFORM 1)</scope>
</reference>
<reference key="2">
    <citation type="submission" date="2007-05" db="EMBL/GenBank/DDBJ databases">
        <title>Research on human heart developmental candidate gene PYGO1.</title>
        <authorList>
            <person name="Wang C.D."/>
            <person name="Wu X.S."/>
            <person name="Liu M.Y."/>
        </authorList>
    </citation>
    <scope>NUCLEOTIDE SEQUENCE [MRNA] (ISOFORM 2)</scope>
    <source>
        <tissue>Heart</tissue>
    </source>
</reference>
<reference key="3">
    <citation type="journal article" date="2006" name="Nature">
        <title>Analysis of the DNA sequence and duplication history of human chromosome 15.</title>
        <authorList>
            <person name="Zody M.C."/>
            <person name="Garber M."/>
            <person name="Sharpe T."/>
            <person name="Young S.K."/>
            <person name="Rowen L."/>
            <person name="O'Neill K."/>
            <person name="Whittaker C.A."/>
            <person name="Kamal M."/>
            <person name="Chang J.L."/>
            <person name="Cuomo C.A."/>
            <person name="Dewar K."/>
            <person name="FitzGerald M.G."/>
            <person name="Kodira C.D."/>
            <person name="Madan A."/>
            <person name="Qin S."/>
            <person name="Yang X."/>
            <person name="Abbasi N."/>
            <person name="Abouelleil A."/>
            <person name="Arachchi H.M."/>
            <person name="Baradarani L."/>
            <person name="Birditt B."/>
            <person name="Bloom S."/>
            <person name="Bloom T."/>
            <person name="Borowsky M.L."/>
            <person name="Burke J."/>
            <person name="Butler J."/>
            <person name="Cook A."/>
            <person name="DeArellano K."/>
            <person name="DeCaprio D."/>
            <person name="Dorris L. III"/>
            <person name="Dors M."/>
            <person name="Eichler E.E."/>
            <person name="Engels R."/>
            <person name="Fahey J."/>
            <person name="Fleetwood P."/>
            <person name="Friedman C."/>
            <person name="Gearin G."/>
            <person name="Hall J.L."/>
            <person name="Hensley G."/>
            <person name="Johnson E."/>
            <person name="Jones C."/>
            <person name="Kamat A."/>
            <person name="Kaur A."/>
            <person name="Locke D.P."/>
            <person name="Madan A."/>
            <person name="Munson G."/>
            <person name="Jaffe D.B."/>
            <person name="Lui A."/>
            <person name="Macdonald P."/>
            <person name="Mauceli E."/>
            <person name="Naylor J.W."/>
            <person name="Nesbitt R."/>
            <person name="Nicol R."/>
            <person name="O'Leary S.B."/>
            <person name="Ratcliffe A."/>
            <person name="Rounsley S."/>
            <person name="She X."/>
            <person name="Sneddon K.M.B."/>
            <person name="Stewart S."/>
            <person name="Sougnez C."/>
            <person name="Stone S.M."/>
            <person name="Topham K."/>
            <person name="Vincent D."/>
            <person name="Wang S."/>
            <person name="Zimmer A.R."/>
            <person name="Birren B.W."/>
            <person name="Hood L."/>
            <person name="Lander E.S."/>
            <person name="Nusbaum C."/>
        </authorList>
    </citation>
    <scope>NUCLEOTIDE SEQUENCE [LARGE SCALE GENOMIC DNA]</scope>
</reference>
<reference key="4">
    <citation type="journal article" date="2007" name="BMC Genomics">
        <title>The full-ORF clone resource of the German cDNA consortium.</title>
        <authorList>
            <person name="Bechtel S."/>
            <person name="Rosenfelder H."/>
            <person name="Duda A."/>
            <person name="Schmidt C.P."/>
            <person name="Ernst U."/>
            <person name="Wellenreuther R."/>
            <person name="Mehrle A."/>
            <person name="Schuster C."/>
            <person name="Bahr A."/>
            <person name="Bloecker H."/>
            <person name="Heubner D."/>
            <person name="Hoerlein A."/>
            <person name="Michel G."/>
            <person name="Wedler H."/>
            <person name="Koehrer K."/>
            <person name="Ottenwaelder B."/>
            <person name="Poustka A."/>
            <person name="Wiemann S."/>
            <person name="Schupp I."/>
        </authorList>
    </citation>
    <scope>NUCLEOTIDE SEQUENCE [LARGE SCALE MRNA] OF 303-419 (ISOFORM 1)</scope>
    <source>
        <tissue>Fetal brain</tissue>
    </source>
</reference>
<reference key="5">
    <citation type="journal article" date="2007" name="Mech. Dev.">
        <title>BCL9-2 binds Arm/beta-catenin in a Tyr142-independent manner and requires Pygopus for its function in Wg/Wnt signaling.</title>
        <authorList>
            <person name="Hoffmans R."/>
            <person name="Basler K."/>
        </authorList>
    </citation>
    <scope>IDENTIFICATION IN A COMPLEX WITH BCL9L; CDC73 AND CTNNB1</scope>
</reference>
<reference key="6">
    <citation type="journal article" date="2008" name="Mol. Cell">
        <title>Decoding of methylated histone H3 tail by the Pygo-BCL9 Wnt signaling complex.</title>
        <authorList>
            <person name="Fiedler M."/>
            <person name="Sanchez-Barrena M.J."/>
            <person name="Nekrasov M."/>
            <person name="Mieszczanek J."/>
            <person name="Rybin V."/>
            <person name="Muller J."/>
            <person name="Evans P."/>
            <person name="Bienz M."/>
        </authorList>
    </citation>
    <scope>X-RAY CRYSTALLOGRAPHY (1.59 ANGSTROMS) OF 333-397 IN COMPLEX WITH ZINC IONS; HISTONE H3K4ME2 AND BCL9</scope>
    <scope>INTERACTION WITH BCL9 AND HISTONE H3KME1; H3K4M2; H3K4ME3</scope>
    <scope>ZINC-BINDING</scope>
    <scope>MUTAGENESIS OF GLU-349; VAL-350; ASN-351; GLN-354; ALA-356; ILE-357; GLU-360 AND TRP-366</scope>
</reference>
<proteinExistence type="evidence at protein level"/>
<feature type="chain" id="PRO_0000097121" description="Pygopus homolog 1">
    <location>
        <begin position="1"/>
        <end position="419"/>
    </location>
</feature>
<feature type="zinc finger region" description="PHD-type" evidence="2">
    <location>
        <begin position="340"/>
        <end position="398"/>
    </location>
</feature>
<feature type="region of interest" description="Disordered" evidence="3">
    <location>
        <begin position="1"/>
        <end position="64"/>
    </location>
</feature>
<feature type="region of interest" description="Disordered" evidence="3">
    <location>
        <begin position="175"/>
        <end position="338"/>
    </location>
</feature>
<feature type="region of interest" description="Interaction with H3K4me2">
    <location>
        <begin position="341"/>
        <end position="388"/>
    </location>
</feature>
<feature type="region of interest" description="Interaction with BCL9" evidence="5">
    <location>
        <begin position="373"/>
        <end position="391"/>
    </location>
</feature>
<feature type="short sequence motif" description="Nuclear localization signal" evidence="1">
    <location>
        <begin position="35"/>
        <end position="41"/>
    </location>
</feature>
<feature type="compositionally biased region" description="Gly residues" evidence="3">
    <location>
        <begin position="18"/>
        <end position="30"/>
    </location>
</feature>
<feature type="compositionally biased region" description="Polar residues" evidence="3">
    <location>
        <begin position="175"/>
        <end position="221"/>
    </location>
</feature>
<feature type="compositionally biased region" description="Polar residues" evidence="3">
    <location>
        <begin position="240"/>
        <end position="255"/>
    </location>
</feature>
<feature type="compositionally biased region" description="Low complexity" evidence="3">
    <location>
        <begin position="276"/>
        <end position="286"/>
    </location>
</feature>
<feature type="compositionally biased region" description="Polar residues" evidence="3">
    <location>
        <begin position="287"/>
        <end position="307"/>
    </location>
</feature>
<feature type="splice variant" id="VSP_056648" description="In isoform 2." evidence="6">
    <original>MPAENSPAPAYKVSSH</original>
    <variation>MSAEQEKDPISLKRVR</variation>
    <location>
        <begin position="1"/>
        <end position="16"/>
    </location>
</feature>
<feature type="sequence variant" id="VAR_051292" description="In dbSNP:rs11858624.">
    <original>P</original>
    <variation>H</variation>
    <location>
        <position position="299"/>
    </location>
</feature>
<feature type="mutagenesis site" description="Reduces interaction with H3K4me2." evidence="5">
    <original>E</original>
    <variation>A</variation>
    <location>
        <position position="349"/>
    </location>
</feature>
<feature type="mutagenesis site" description="Almost complete loss of interaction with H3K4me2." evidence="5">
    <original>V</original>
    <variation>E</variation>
    <location>
        <position position="350"/>
    </location>
</feature>
<feature type="mutagenesis site" description="Reduces interaction with H3K4me2." evidence="5">
    <original>N</original>
    <variation>A</variation>
    <location>
        <position position="351"/>
    </location>
</feature>
<feature type="mutagenesis site" description="Reduces interaction with H3K4me2." evidence="5">
    <original>Q</original>
    <variation>A</variation>
    <location>
        <position position="354"/>
    </location>
</feature>
<feature type="mutagenesis site" description="Almost complete loss of interaction with H3K4me2." evidence="5">
    <original>A</original>
    <variation>E</variation>
    <location>
        <position position="356"/>
    </location>
</feature>
<feature type="mutagenesis site" description="Loss of interaction with H3K4me2." evidence="5">
    <original>I</original>
    <variation>R</variation>
    <location>
        <position position="357"/>
    </location>
</feature>
<feature type="mutagenesis site" description="Loss of interaction with H3K4me2." evidence="5">
    <original>E</original>
    <variation>A</variation>
    <location>
        <position position="360"/>
    </location>
</feature>
<feature type="mutagenesis site" description="Loss of interaction with H3K4me2." evidence="5">
    <original>W</original>
    <variation>E</variation>
    <location>
        <position position="366"/>
    </location>
</feature>
<feature type="strand" evidence="9">
    <location>
        <begin position="340"/>
        <end position="342"/>
    </location>
</feature>
<feature type="turn" evidence="8">
    <location>
        <begin position="344"/>
        <end position="346"/>
    </location>
</feature>
<feature type="strand" evidence="8">
    <location>
        <begin position="356"/>
        <end position="359"/>
    </location>
</feature>
<feature type="turn" evidence="8">
    <location>
        <begin position="360"/>
        <end position="363"/>
    </location>
</feature>
<feature type="strand" evidence="8">
    <location>
        <begin position="366"/>
        <end position="368"/>
    </location>
</feature>
<feature type="helix" evidence="8">
    <location>
        <begin position="369"/>
        <end position="372"/>
    </location>
</feature>
<feature type="helix" evidence="8">
    <location>
        <begin position="376"/>
        <end position="384"/>
    </location>
</feature>
<feature type="strand" evidence="8">
    <location>
        <begin position="388"/>
        <end position="390"/>
    </location>
</feature>
<feature type="helix" evidence="8">
    <location>
        <begin position="393"/>
        <end position="396"/>
    </location>
</feature>
<organism>
    <name type="scientific">Homo sapiens</name>
    <name type="common">Human</name>
    <dbReference type="NCBI Taxonomy" id="9606"/>
    <lineage>
        <taxon>Eukaryota</taxon>
        <taxon>Metazoa</taxon>
        <taxon>Chordata</taxon>
        <taxon>Craniata</taxon>
        <taxon>Vertebrata</taxon>
        <taxon>Euteleostomi</taxon>
        <taxon>Mammalia</taxon>
        <taxon>Eutheria</taxon>
        <taxon>Euarchontoglires</taxon>
        <taxon>Primates</taxon>
        <taxon>Haplorrhini</taxon>
        <taxon>Catarrhini</taxon>
        <taxon>Hominidae</taxon>
        <taxon>Homo</taxon>
    </lineage>
</organism>
<comment type="function">
    <text>Involved in signal transduction through the Wnt pathway.</text>
</comment>
<comment type="subunit">
    <text evidence="4 5">Interacts with BCL9 via The PHD-type zinc finger motiv, and thereby becomes part of the nuclear beta-catenin/TCF complex. Identified in a complex with BCL9L, CDC73, CTNNB1 and PYGO1. Interacts with histone H3 mono-, di- or tri-methylated at 'Lys4' (H3K4me1, H3K4me2, H3K4me3); the interaction is enhanced by the interaction with BCL9.</text>
</comment>
<comment type="interaction">
    <interactant intactId="EBI-3397474">
        <id>Q9Y3Y4</id>
    </interactant>
    <interactant intactId="EBI-714718">
        <id>P61769</id>
        <label>B2M</label>
    </interactant>
    <organismsDiffer>false</organismsDiffer>
    <experiments>3</experiments>
</comment>
<comment type="interaction">
    <interactant intactId="EBI-3397474">
        <id>Q9Y3Y4</id>
    </interactant>
    <interactant intactId="EBI-533127">
        <id>O00512</id>
        <label>BCL9</label>
    </interactant>
    <organismsDiffer>false</organismsDiffer>
    <experiments>8</experiments>
</comment>
<comment type="interaction">
    <interactant intactId="EBI-3397474">
        <id>Q9Y3Y4</id>
    </interactant>
    <interactant intactId="EBI-1049597">
        <id>P27797</id>
        <label>CALR</label>
    </interactant>
    <organismsDiffer>false</organismsDiffer>
    <experiments>3</experiments>
</comment>
<comment type="interaction">
    <interactant intactId="EBI-3397474">
        <id>Q9Y3Y4</id>
    </interactant>
    <interactant intactId="EBI-351007">
        <id>P36957</id>
        <label>DLST</label>
    </interactant>
    <organismsDiffer>false</organismsDiffer>
    <experiments>3</experiments>
</comment>
<comment type="interaction">
    <interactant intactId="EBI-3397474">
        <id>Q9Y3Y4</id>
    </interactant>
    <interactant intactId="EBI-1055945">
        <id>Q8TDX7</id>
        <label>NEK7</label>
    </interactant>
    <organismsDiffer>false</organismsDiffer>
    <experiments>3</experiments>
</comment>
<comment type="interaction">
    <interactant intactId="EBI-3397474">
        <id>Q9Y3Y4</id>
    </interactant>
    <interactant intactId="EBI-11952721">
        <id>Q05BL1</id>
        <label>TP53BP2</label>
    </interactant>
    <organismsDiffer>false</organismsDiffer>
    <experiments>3</experiments>
</comment>
<comment type="subcellular location">
    <subcellularLocation>
        <location evidence="7">Nucleus</location>
    </subcellularLocation>
</comment>
<comment type="alternative products">
    <event type="alternative splicing"/>
    <isoform>
        <id>Q9Y3Y4-1</id>
        <name>1</name>
        <sequence type="displayed"/>
    </isoform>
    <isoform>
        <id>Q9Y3Y4-2</id>
        <name>2</name>
        <sequence type="described" ref="VSP_056648"/>
    </isoform>
</comment>
<keyword id="KW-0002">3D-structure</keyword>
<keyword id="KW-0025">Alternative splicing</keyword>
<keyword id="KW-0479">Metal-binding</keyword>
<keyword id="KW-0539">Nucleus</keyword>
<keyword id="KW-1267">Proteomics identification</keyword>
<keyword id="KW-1185">Reference proteome</keyword>
<keyword id="KW-0879">Wnt signaling pathway</keyword>
<keyword id="KW-0862">Zinc</keyword>
<keyword id="KW-0863">Zinc-finger</keyword>
<evidence type="ECO:0000255" key="1"/>
<evidence type="ECO:0000255" key="2">
    <source>
        <dbReference type="PROSITE-ProRule" id="PRU00146"/>
    </source>
</evidence>
<evidence type="ECO:0000256" key="3">
    <source>
        <dbReference type="SAM" id="MobiDB-lite"/>
    </source>
</evidence>
<evidence type="ECO:0000269" key="4">
    <source>
    </source>
</evidence>
<evidence type="ECO:0000269" key="5">
    <source>
    </source>
</evidence>
<evidence type="ECO:0000303" key="6">
    <source ref="2"/>
</evidence>
<evidence type="ECO:0000305" key="7"/>
<evidence type="ECO:0007829" key="8">
    <source>
        <dbReference type="PDB" id="2VPB"/>
    </source>
</evidence>
<evidence type="ECO:0007829" key="9">
    <source>
        <dbReference type="PDB" id="2VPG"/>
    </source>
</evidence>
<protein>
    <recommendedName>
        <fullName>Pygopus homolog 1</fullName>
    </recommendedName>
</protein>
<dbReference type="EMBL" id="AF457207">
    <property type="protein sequence ID" value="AAL91370.1"/>
    <property type="molecule type" value="mRNA"/>
</dbReference>
<dbReference type="EMBL" id="EF625686">
    <property type="protein sequence ID" value="ABU93489.1"/>
    <property type="molecule type" value="mRNA"/>
</dbReference>
<dbReference type="EMBL" id="AC012378">
    <property type="status" value="NOT_ANNOTATED_CDS"/>
    <property type="molecule type" value="Genomic_DNA"/>
</dbReference>
<dbReference type="EMBL" id="AC022083">
    <property type="status" value="NOT_ANNOTATED_CDS"/>
    <property type="molecule type" value="Genomic_DNA"/>
</dbReference>
<dbReference type="EMBL" id="AL049925">
    <property type="protein sequence ID" value="CAB43209.1"/>
    <property type="molecule type" value="mRNA"/>
</dbReference>
<dbReference type="CCDS" id="CCDS10155.1">
    <molecule id="Q9Y3Y4-1"/>
</dbReference>
<dbReference type="CCDS" id="CCDS81885.1">
    <molecule id="Q9Y3Y4-2"/>
</dbReference>
<dbReference type="PIR" id="T08663">
    <property type="entry name" value="T08663"/>
</dbReference>
<dbReference type="RefSeq" id="NP_001317255.1">
    <molecule id="Q9Y3Y4-2"/>
    <property type="nucleotide sequence ID" value="NM_001330326.2"/>
</dbReference>
<dbReference type="RefSeq" id="NP_001354735.1">
    <molecule id="Q9Y3Y4-2"/>
    <property type="nucleotide sequence ID" value="NM_001367806.1"/>
</dbReference>
<dbReference type="RefSeq" id="NP_056432.1">
    <molecule id="Q9Y3Y4-1"/>
    <property type="nucleotide sequence ID" value="NM_015617.3"/>
</dbReference>
<dbReference type="RefSeq" id="XP_011519748.1">
    <property type="nucleotide sequence ID" value="XM_011521446.2"/>
</dbReference>
<dbReference type="PDB" id="2VP7">
    <property type="method" value="X-ray"/>
    <property type="resolution" value="1.65 A"/>
    <property type="chains" value="A=333-402"/>
</dbReference>
<dbReference type="PDB" id="2VPB">
    <property type="method" value="X-ray"/>
    <property type="resolution" value="1.59 A"/>
    <property type="chains" value="A=333-397"/>
</dbReference>
<dbReference type="PDB" id="2VPD">
    <property type="method" value="X-ray"/>
    <property type="resolution" value="2.77 A"/>
    <property type="chains" value="A/C=333-398"/>
</dbReference>
<dbReference type="PDB" id="2VPE">
    <property type="method" value="X-ray"/>
    <property type="resolution" value="1.70 A"/>
    <property type="chains" value="A/C=340-398"/>
</dbReference>
<dbReference type="PDB" id="2VPG">
    <property type="method" value="X-ray"/>
    <property type="resolution" value="1.60 A"/>
    <property type="chains" value="A/C=340-398"/>
</dbReference>
<dbReference type="PDBsum" id="2VP7"/>
<dbReference type="PDBsum" id="2VPB"/>
<dbReference type="PDBsum" id="2VPD"/>
<dbReference type="PDBsum" id="2VPE"/>
<dbReference type="PDBsum" id="2VPG"/>
<dbReference type="SMR" id="Q9Y3Y4"/>
<dbReference type="BioGRID" id="117557">
    <property type="interactions" value="24"/>
</dbReference>
<dbReference type="FunCoup" id="Q9Y3Y4">
    <property type="interactions" value="497"/>
</dbReference>
<dbReference type="IntAct" id="Q9Y3Y4">
    <property type="interactions" value="27"/>
</dbReference>
<dbReference type="MINT" id="Q9Y3Y4"/>
<dbReference type="STRING" id="9606.ENSP00000302327"/>
<dbReference type="iPTMnet" id="Q9Y3Y4"/>
<dbReference type="PhosphoSitePlus" id="Q9Y3Y4"/>
<dbReference type="BioMuta" id="PYGO1"/>
<dbReference type="DMDM" id="23396828"/>
<dbReference type="jPOST" id="Q9Y3Y4"/>
<dbReference type="MassIVE" id="Q9Y3Y4"/>
<dbReference type="PaxDb" id="9606-ENSP00000302327"/>
<dbReference type="PeptideAtlas" id="Q9Y3Y4"/>
<dbReference type="ProteomicsDB" id="1817"/>
<dbReference type="ProteomicsDB" id="86087">
    <molecule id="Q9Y3Y4-1"/>
</dbReference>
<dbReference type="Pumba" id="Q9Y3Y4"/>
<dbReference type="Antibodypedia" id="25101">
    <property type="antibodies" value="158 antibodies from 22 providers"/>
</dbReference>
<dbReference type="DNASU" id="26108"/>
<dbReference type="Ensembl" id="ENST00000302000.10">
    <molecule id="Q9Y3Y4-1"/>
    <property type="protein sequence ID" value="ENSP00000302327.6"/>
    <property type="gene ID" value="ENSG00000171016.13"/>
</dbReference>
<dbReference type="Ensembl" id="ENST00000563719.4">
    <molecule id="Q9Y3Y4-2"/>
    <property type="protein sequence ID" value="ENSP00000457777.1"/>
    <property type="gene ID" value="ENSG00000171016.13"/>
</dbReference>
<dbReference type="Ensembl" id="ENST00000645724.1">
    <molecule id="Q9Y3Y4-2"/>
    <property type="protein sequence ID" value="ENSP00000496139.1"/>
    <property type="gene ID" value="ENSG00000171016.13"/>
</dbReference>
<dbReference type="GeneID" id="26108"/>
<dbReference type="KEGG" id="hsa:26108"/>
<dbReference type="MANE-Select" id="ENST00000563719.4">
    <molecule id="Q9Y3Y4-2"/>
    <property type="protein sequence ID" value="ENSP00000457777.1"/>
    <property type="RefSeq nucleotide sequence ID" value="NM_001367806.1"/>
    <property type="RefSeq protein sequence ID" value="NP_001354735.1"/>
</dbReference>
<dbReference type="UCSC" id="uc002adf.3">
    <molecule id="Q9Y3Y4-1"/>
    <property type="organism name" value="human"/>
</dbReference>
<dbReference type="AGR" id="HGNC:30256"/>
<dbReference type="CTD" id="26108"/>
<dbReference type="DisGeNET" id="26108"/>
<dbReference type="GeneCards" id="PYGO1"/>
<dbReference type="HGNC" id="HGNC:30256">
    <property type="gene designation" value="PYGO1"/>
</dbReference>
<dbReference type="HPA" id="ENSG00000171016">
    <property type="expression patterns" value="Low tissue specificity"/>
</dbReference>
<dbReference type="MIM" id="606902">
    <property type="type" value="gene"/>
</dbReference>
<dbReference type="neXtProt" id="NX_Q9Y3Y4"/>
<dbReference type="OpenTargets" id="ENSG00000171016"/>
<dbReference type="PharmGKB" id="PA134875127"/>
<dbReference type="VEuPathDB" id="HostDB:ENSG00000171016"/>
<dbReference type="eggNOG" id="ENOG502QTIZ">
    <property type="taxonomic scope" value="Eukaryota"/>
</dbReference>
<dbReference type="GeneTree" id="ENSGT00530000063948"/>
<dbReference type="HOGENOM" id="CLU_686883_0_0_1"/>
<dbReference type="InParanoid" id="Q9Y3Y4"/>
<dbReference type="OMA" id="CTHEVND"/>
<dbReference type="OrthoDB" id="270215at2759"/>
<dbReference type="PAN-GO" id="Q9Y3Y4">
    <property type="GO annotations" value="2 GO annotations based on evolutionary models"/>
</dbReference>
<dbReference type="PhylomeDB" id="Q9Y3Y4"/>
<dbReference type="TreeFam" id="TF333020"/>
<dbReference type="PathwayCommons" id="Q9Y3Y4"/>
<dbReference type="Reactome" id="R-HSA-201722">
    <property type="pathway name" value="Formation of the beta-catenin:TCF transactivating complex"/>
</dbReference>
<dbReference type="Reactome" id="R-HSA-3769402">
    <property type="pathway name" value="Deactivation of the beta-catenin transactivating complex"/>
</dbReference>
<dbReference type="SignaLink" id="Q9Y3Y4"/>
<dbReference type="SIGNOR" id="Q9Y3Y4"/>
<dbReference type="BioGRID-ORCS" id="26108">
    <property type="hits" value="14 hits in 1153 CRISPR screens"/>
</dbReference>
<dbReference type="ChiTaRS" id="PYGO1">
    <property type="organism name" value="human"/>
</dbReference>
<dbReference type="EvolutionaryTrace" id="Q9Y3Y4"/>
<dbReference type="GenomeRNAi" id="26108"/>
<dbReference type="Pharos" id="Q9Y3Y4">
    <property type="development level" value="Tbio"/>
</dbReference>
<dbReference type="PRO" id="PR:Q9Y3Y4"/>
<dbReference type="Proteomes" id="UP000005640">
    <property type="component" value="Chromosome 15"/>
</dbReference>
<dbReference type="RNAct" id="Q9Y3Y4">
    <property type="molecule type" value="protein"/>
</dbReference>
<dbReference type="Bgee" id="ENSG00000171016">
    <property type="expression patterns" value="Expressed in cortical plate and 119 other cell types or tissues"/>
</dbReference>
<dbReference type="GO" id="GO:0005654">
    <property type="term" value="C:nucleoplasm"/>
    <property type="evidence" value="ECO:0000304"/>
    <property type="project" value="Reactome"/>
</dbReference>
<dbReference type="GO" id="GO:0140002">
    <property type="term" value="F:histone H3K4me3 reader activity"/>
    <property type="evidence" value="ECO:0000314"/>
    <property type="project" value="FlyBase"/>
</dbReference>
<dbReference type="GO" id="GO:0008270">
    <property type="term" value="F:zinc ion binding"/>
    <property type="evidence" value="ECO:0007669"/>
    <property type="project" value="UniProtKB-KW"/>
</dbReference>
<dbReference type="GO" id="GO:0060070">
    <property type="term" value="P:canonical Wnt signaling pathway"/>
    <property type="evidence" value="ECO:0007669"/>
    <property type="project" value="Ensembl"/>
</dbReference>
<dbReference type="GO" id="GO:0002244">
    <property type="term" value="P:hematopoietic progenitor cell differentiation"/>
    <property type="evidence" value="ECO:0007669"/>
    <property type="project" value="Ensembl"/>
</dbReference>
<dbReference type="GO" id="GO:0001822">
    <property type="term" value="P:kidney development"/>
    <property type="evidence" value="ECO:0000318"/>
    <property type="project" value="GO_Central"/>
</dbReference>
<dbReference type="GO" id="GO:0045944">
    <property type="term" value="P:positive regulation of transcription by RNA polymerase II"/>
    <property type="evidence" value="ECO:0007669"/>
    <property type="project" value="Ensembl"/>
</dbReference>
<dbReference type="GO" id="GO:0034504">
    <property type="term" value="P:protein localization to nucleus"/>
    <property type="evidence" value="ECO:0007669"/>
    <property type="project" value="Ensembl"/>
</dbReference>
<dbReference type="GO" id="GO:0007289">
    <property type="term" value="P:spermatid nucleus differentiation"/>
    <property type="evidence" value="ECO:0000318"/>
    <property type="project" value="GO_Central"/>
</dbReference>
<dbReference type="CDD" id="cd15635">
    <property type="entry name" value="PHD_PYGO1"/>
    <property type="match status" value="1"/>
</dbReference>
<dbReference type="FunFam" id="3.30.40.10:FF:000107">
    <property type="entry name" value="pygopus homolog 1"/>
    <property type="match status" value="1"/>
</dbReference>
<dbReference type="Gene3D" id="3.30.40.10">
    <property type="entry name" value="Zinc/RING finger domain, C3HC4 (zinc finger)"/>
    <property type="match status" value="1"/>
</dbReference>
<dbReference type="IDEAL" id="IID00255"/>
<dbReference type="InterPro" id="IPR052475">
    <property type="entry name" value="Wnt_Signal_Transd_Protein"/>
</dbReference>
<dbReference type="InterPro" id="IPR019786">
    <property type="entry name" value="Zinc_finger_PHD-type_CS"/>
</dbReference>
<dbReference type="InterPro" id="IPR011011">
    <property type="entry name" value="Znf_FYVE_PHD"/>
</dbReference>
<dbReference type="InterPro" id="IPR001965">
    <property type="entry name" value="Znf_PHD"/>
</dbReference>
<dbReference type="InterPro" id="IPR019787">
    <property type="entry name" value="Znf_PHD-finger"/>
</dbReference>
<dbReference type="InterPro" id="IPR013083">
    <property type="entry name" value="Znf_RING/FYVE/PHD"/>
</dbReference>
<dbReference type="PANTHER" id="PTHR23194">
    <property type="entry name" value="PYGOPUS"/>
    <property type="match status" value="1"/>
</dbReference>
<dbReference type="PANTHER" id="PTHR23194:SF3">
    <property type="entry name" value="PYGOPUS HOMOLOG 1"/>
    <property type="match status" value="1"/>
</dbReference>
<dbReference type="Pfam" id="PF00628">
    <property type="entry name" value="PHD"/>
    <property type="match status" value="1"/>
</dbReference>
<dbReference type="SMART" id="SM00249">
    <property type="entry name" value="PHD"/>
    <property type="match status" value="1"/>
</dbReference>
<dbReference type="SUPFAM" id="SSF57903">
    <property type="entry name" value="FYVE/PHD zinc finger"/>
    <property type="match status" value="1"/>
</dbReference>
<dbReference type="PROSITE" id="PS01359">
    <property type="entry name" value="ZF_PHD_1"/>
    <property type="match status" value="1"/>
</dbReference>
<dbReference type="PROSITE" id="PS50016">
    <property type="entry name" value="ZF_PHD_2"/>
    <property type="match status" value="1"/>
</dbReference>
<accession>Q9Y3Y4</accession>
<accession>A7Y2D6</accession>